<gene>
    <name type="ordered locus">SAB1209c</name>
</gene>
<accession>Q2YXW5</accession>
<sequence length="98" mass="11496">MQIELTDAAVTWFKNELELPENNKVLVFFVRYGGEFQLKQGFSPAFTVEPKEDVDIGYEQQYDDLNVVVAEKDLWYFEDDHIIVNVVDHEDEISYSTK</sequence>
<name>Y1209_STAAB</name>
<protein>
    <recommendedName>
        <fullName>Uncharacterized protein SAB1209c</fullName>
    </recommendedName>
</protein>
<reference key="1">
    <citation type="journal article" date="2007" name="PLoS ONE">
        <title>Molecular correlates of host specialization in Staphylococcus aureus.</title>
        <authorList>
            <person name="Herron-Olson L."/>
            <person name="Fitzgerald J.R."/>
            <person name="Musser J.M."/>
            <person name="Kapur V."/>
        </authorList>
    </citation>
    <scope>NUCLEOTIDE SEQUENCE [LARGE SCALE GENOMIC DNA]</scope>
    <source>
        <strain>bovine RF122 / ET3-1</strain>
    </source>
</reference>
<dbReference type="EMBL" id="AJ938182">
    <property type="protein sequence ID" value="CAI80898.1"/>
    <property type="molecule type" value="Genomic_DNA"/>
</dbReference>
<dbReference type="RefSeq" id="WP_001165377.1">
    <property type="nucleotide sequence ID" value="NC_007622.1"/>
</dbReference>
<dbReference type="SMR" id="Q2YXW5"/>
<dbReference type="KEGG" id="sab:SAB1209c"/>
<dbReference type="HOGENOM" id="CLU_163967_0_0_9"/>
<dbReference type="InterPro" id="IPR035903">
    <property type="entry name" value="HesB-like_dom_sf"/>
</dbReference>
<dbReference type="InterPro" id="IPR008326">
    <property type="entry name" value="PdhI-like"/>
</dbReference>
<dbReference type="PIRSF" id="PIRSF034852">
    <property type="entry name" value="UCP034852"/>
    <property type="match status" value="1"/>
</dbReference>
<dbReference type="SUPFAM" id="SSF89360">
    <property type="entry name" value="HesB-like domain"/>
    <property type="match status" value="1"/>
</dbReference>
<evidence type="ECO:0000305" key="1"/>
<feature type="chain" id="PRO_0000300082" description="Uncharacterized protein SAB1209c">
    <location>
        <begin position="1"/>
        <end position="98"/>
    </location>
</feature>
<proteinExistence type="inferred from homology"/>
<comment type="similarity">
    <text evidence="1">Belongs to the HesB/IscA family.</text>
</comment>
<organism>
    <name type="scientific">Staphylococcus aureus (strain bovine RF122 / ET3-1)</name>
    <dbReference type="NCBI Taxonomy" id="273036"/>
    <lineage>
        <taxon>Bacteria</taxon>
        <taxon>Bacillati</taxon>
        <taxon>Bacillota</taxon>
        <taxon>Bacilli</taxon>
        <taxon>Bacillales</taxon>
        <taxon>Staphylococcaceae</taxon>
        <taxon>Staphylococcus</taxon>
    </lineage>
</organism>